<dbReference type="EMBL" id="AB073611">
    <property type="protein sequence ID" value="BAD38648.1"/>
    <property type="molecule type" value="mRNA"/>
</dbReference>
<dbReference type="EMBL" id="AF414429">
    <property type="protein sequence ID" value="AAL07469.1"/>
    <property type="molecule type" value="mRNA"/>
</dbReference>
<dbReference type="EMBL" id="AK289417">
    <property type="protein sequence ID" value="BAF82106.1"/>
    <property type="molecule type" value="mRNA"/>
</dbReference>
<dbReference type="EMBL" id="AC010642">
    <property type="status" value="NOT_ANNOTATED_CDS"/>
    <property type="molecule type" value="Genomic_DNA"/>
</dbReference>
<dbReference type="EMBL" id="AC012313">
    <property type="status" value="NOT_ANNOTATED_CDS"/>
    <property type="molecule type" value="Genomic_DNA"/>
</dbReference>
<dbReference type="EMBL" id="BC035719">
    <property type="protein sequence ID" value="AAH35719.1"/>
    <property type="molecule type" value="mRNA"/>
</dbReference>
<dbReference type="CCDS" id="CCDS12976.1">
    <molecule id="P04217-1"/>
</dbReference>
<dbReference type="RefSeq" id="NP_570602.2">
    <molecule id="P04217-1"/>
    <property type="nucleotide sequence ID" value="NM_130786.3"/>
</dbReference>
<dbReference type="SMR" id="P04217"/>
<dbReference type="BioGRID" id="106523">
    <property type="interactions" value="37"/>
</dbReference>
<dbReference type="FunCoup" id="P04217">
    <property type="interactions" value="116"/>
</dbReference>
<dbReference type="IntAct" id="P04217">
    <property type="interactions" value="25"/>
</dbReference>
<dbReference type="MINT" id="P04217"/>
<dbReference type="STRING" id="9606.ENSP00000263100"/>
<dbReference type="DrugBank" id="DB09130">
    <property type="generic name" value="Copper"/>
</dbReference>
<dbReference type="DrugBank" id="DB01593">
    <property type="generic name" value="Zinc"/>
</dbReference>
<dbReference type="DrugBank" id="DB14487">
    <property type="generic name" value="Zinc acetate"/>
</dbReference>
<dbReference type="MEROPS" id="I43.950"/>
<dbReference type="GlyConnect" id="780">
    <property type="glycosylation" value="9 N-Linked glycans (4 sites)"/>
</dbReference>
<dbReference type="GlyCosmos" id="P04217">
    <property type="glycosylation" value="5 sites, 18 glycans"/>
</dbReference>
<dbReference type="GlyGen" id="P04217">
    <property type="glycosylation" value="9 sites, 26 N-linked glycans (4 sites), 3 O-linked glycans (4 sites)"/>
</dbReference>
<dbReference type="iPTMnet" id="P04217"/>
<dbReference type="PhosphoSitePlus" id="P04217"/>
<dbReference type="SwissPalm" id="P04217"/>
<dbReference type="BioMuta" id="A1BG"/>
<dbReference type="DMDM" id="317373553"/>
<dbReference type="REPRODUCTION-2DPAGE" id="IPI00022895"/>
<dbReference type="CPTAC" id="non-CPTAC-1064"/>
<dbReference type="jPOST" id="P04217"/>
<dbReference type="MassIVE" id="P04217"/>
<dbReference type="PaxDb" id="9606-ENSP00000263100"/>
<dbReference type="PeptideAtlas" id="P04217"/>
<dbReference type="PRIDE" id="P04217"/>
<dbReference type="ProteomicsDB" id="51684">
    <molecule id="P04217-1"/>
</dbReference>
<dbReference type="ProteomicsDB" id="51685">
    <molecule id="P04217-2"/>
</dbReference>
<dbReference type="Antibodypedia" id="3284">
    <property type="antibodies" value="435 antibodies from 37 providers"/>
</dbReference>
<dbReference type="Ensembl" id="ENST00000263100.8">
    <molecule id="P04217-1"/>
    <property type="protein sequence ID" value="ENSP00000263100.2"/>
    <property type="gene ID" value="ENSG00000121410.12"/>
</dbReference>
<dbReference type="GeneID" id="1"/>
<dbReference type="KEGG" id="hsa:1"/>
<dbReference type="MANE-Select" id="ENST00000263100.8">
    <property type="protein sequence ID" value="ENSP00000263100.2"/>
    <property type="RefSeq nucleotide sequence ID" value="NM_130786.4"/>
    <property type="RefSeq protein sequence ID" value="NP_570602.2"/>
</dbReference>
<dbReference type="AGR" id="HGNC:5"/>
<dbReference type="CTD" id="1"/>
<dbReference type="DisGeNET" id="1"/>
<dbReference type="GeneCards" id="A1BG"/>
<dbReference type="HGNC" id="HGNC:5">
    <property type="gene designation" value="A1BG"/>
</dbReference>
<dbReference type="HPA" id="ENSG00000121410">
    <property type="expression patterns" value="Tissue enriched (liver)"/>
</dbReference>
<dbReference type="MIM" id="138670">
    <property type="type" value="gene"/>
</dbReference>
<dbReference type="neXtProt" id="NX_P04217"/>
<dbReference type="OpenTargets" id="ENSG00000121410"/>
<dbReference type="PharmGKB" id="PA24356"/>
<dbReference type="VEuPathDB" id="HostDB:ENSG00000121410"/>
<dbReference type="eggNOG" id="ENOG502RYEX">
    <property type="taxonomic scope" value="Eukaryota"/>
</dbReference>
<dbReference type="GeneTree" id="ENSGT01130000278334"/>
<dbReference type="HOGENOM" id="CLU_042929_1_0_1"/>
<dbReference type="InParanoid" id="P04217"/>
<dbReference type="OMA" id="FWGLPMG"/>
<dbReference type="OrthoDB" id="9450204at2759"/>
<dbReference type="PAN-GO" id="P04217">
    <property type="GO annotations" value="0 GO annotations based on evolutionary models"/>
</dbReference>
<dbReference type="PhylomeDB" id="P04217"/>
<dbReference type="TreeFam" id="TF336644"/>
<dbReference type="PathwayCommons" id="P04217"/>
<dbReference type="Reactome" id="R-HSA-114608">
    <property type="pathway name" value="Platelet degranulation"/>
</dbReference>
<dbReference type="Reactome" id="R-HSA-6798695">
    <property type="pathway name" value="Neutrophil degranulation"/>
</dbReference>
<dbReference type="SignaLink" id="P04217"/>
<dbReference type="BioGRID-ORCS" id="1">
    <property type="hits" value="15 hits in 1152 CRISPR screens"/>
</dbReference>
<dbReference type="ChiTaRS" id="A1BG">
    <property type="organism name" value="human"/>
</dbReference>
<dbReference type="GeneWiki" id="A1BG_(gene)"/>
<dbReference type="GenomeRNAi" id="1"/>
<dbReference type="Pharos" id="P04217">
    <property type="development level" value="Tbio"/>
</dbReference>
<dbReference type="PRO" id="PR:P04217"/>
<dbReference type="Proteomes" id="UP000005640">
    <property type="component" value="Chromosome 19"/>
</dbReference>
<dbReference type="RNAct" id="P04217">
    <property type="molecule type" value="protein"/>
</dbReference>
<dbReference type="Bgee" id="ENSG00000121410">
    <property type="expression patterns" value="Expressed in right lobe of liver and 94 other cell types or tissues"/>
</dbReference>
<dbReference type="ExpressionAtlas" id="P04217">
    <property type="expression patterns" value="baseline and differential"/>
</dbReference>
<dbReference type="GO" id="GO:0072562">
    <property type="term" value="C:blood microparticle"/>
    <property type="evidence" value="ECO:0007005"/>
    <property type="project" value="UniProtKB"/>
</dbReference>
<dbReference type="GO" id="GO:0062023">
    <property type="term" value="C:collagen-containing extracellular matrix"/>
    <property type="evidence" value="ECO:0007005"/>
    <property type="project" value="BHF-UCL"/>
</dbReference>
<dbReference type="GO" id="GO:0070062">
    <property type="term" value="C:extracellular exosome"/>
    <property type="evidence" value="ECO:0007005"/>
    <property type="project" value="UniProtKB"/>
</dbReference>
<dbReference type="GO" id="GO:0005576">
    <property type="term" value="C:extracellular region"/>
    <property type="evidence" value="ECO:0000314"/>
    <property type="project" value="UniProtKB"/>
</dbReference>
<dbReference type="GO" id="GO:0005615">
    <property type="term" value="C:extracellular space"/>
    <property type="evidence" value="ECO:0007005"/>
    <property type="project" value="UniProtKB"/>
</dbReference>
<dbReference type="GO" id="GO:1904813">
    <property type="term" value="C:ficolin-1-rich granule lumen"/>
    <property type="evidence" value="ECO:0000304"/>
    <property type="project" value="Reactome"/>
</dbReference>
<dbReference type="GO" id="GO:0005886">
    <property type="term" value="C:plasma membrane"/>
    <property type="evidence" value="ECO:0000318"/>
    <property type="project" value="GO_Central"/>
</dbReference>
<dbReference type="GO" id="GO:0031093">
    <property type="term" value="C:platelet alpha granule lumen"/>
    <property type="evidence" value="ECO:0000304"/>
    <property type="project" value="Reactome"/>
</dbReference>
<dbReference type="GO" id="GO:0034774">
    <property type="term" value="C:secretory granule lumen"/>
    <property type="evidence" value="ECO:0000304"/>
    <property type="project" value="Reactome"/>
</dbReference>
<dbReference type="GO" id="GO:0002764">
    <property type="term" value="P:immune response-regulating signaling pathway"/>
    <property type="evidence" value="ECO:0000318"/>
    <property type="project" value="GO_Central"/>
</dbReference>
<dbReference type="CDD" id="cd16843">
    <property type="entry name" value="IgC2_D1_D2_LILR_KIR_like"/>
    <property type="match status" value="1"/>
</dbReference>
<dbReference type="CDD" id="cd05751">
    <property type="entry name" value="IgC2_D1_LILR_KIR_like"/>
    <property type="match status" value="1"/>
</dbReference>
<dbReference type="FunFam" id="2.60.40.10:FF:002341">
    <property type="entry name" value="Alpha-1-B glycoprotein"/>
    <property type="match status" value="1"/>
</dbReference>
<dbReference type="FunFam" id="2.60.40.10:FF:002892">
    <property type="entry name" value="Alpha-1-B glycoprotein"/>
    <property type="match status" value="1"/>
</dbReference>
<dbReference type="FunFam" id="2.60.40.10:FF:000033">
    <property type="entry name" value="Killer cell immunoglobulin-like receptor"/>
    <property type="match status" value="3"/>
</dbReference>
<dbReference type="Gene3D" id="2.60.40.10">
    <property type="entry name" value="Immunoglobulins"/>
    <property type="match status" value="5"/>
</dbReference>
<dbReference type="InterPro" id="IPR016332">
    <property type="entry name" value="A1B_glyco/leuk_Ig-like_rcpt"/>
</dbReference>
<dbReference type="InterPro" id="IPR007110">
    <property type="entry name" value="Ig-like_dom"/>
</dbReference>
<dbReference type="InterPro" id="IPR036179">
    <property type="entry name" value="Ig-like_dom_sf"/>
</dbReference>
<dbReference type="InterPro" id="IPR013783">
    <property type="entry name" value="Ig-like_fold"/>
</dbReference>
<dbReference type="InterPro" id="IPR050412">
    <property type="entry name" value="Ig-like_Receptors_ImmuneReg"/>
</dbReference>
<dbReference type="InterPro" id="IPR003599">
    <property type="entry name" value="Ig_sub"/>
</dbReference>
<dbReference type="InterPro" id="IPR003598">
    <property type="entry name" value="Ig_sub2"/>
</dbReference>
<dbReference type="PANTHER" id="PTHR11738">
    <property type="entry name" value="MHC CLASS I NK CELL RECEPTOR"/>
    <property type="match status" value="1"/>
</dbReference>
<dbReference type="PANTHER" id="PTHR11738:SF186">
    <property type="entry name" value="OSTEOCLAST-ASSOCIATED IMMUNOGLOBULIN-LIKE RECEPTOR"/>
    <property type="match status" value="1"/>
</dbReference>
<dbReference type="Pfam" id="PF13895">
    <property type="entry name" value="Ig_2"/>
    <property type="match status" value="1"/>
</dbReference>
<dbReference type="PIRSF" id="PIRSF001979">
    <property type="entry name" value="Alpha_1B_glycoprot_prd"/>
    <property type="match status" value="1"/>
</dbReference>
<dbReference type="SMART" id="SM00409">
    <property type="entry name" value="IG"/>
    <property type="match status" value="4"/>
</dbReference>
<dbReference type="SMART" id="SM00408">
    <property type="entry name" value="IGc2"/>
    <property type="match status" value="4"/>
</dbReference>
<dbReference type="SUPFAM" id="SSF48726">
    <property type="entry name" value="Immunoglobulin"/>
    <property type="match status" value="5"/>
</dbReference>
<dbReference type="PROSITE" id="PS50835">
    <property type="entry name" value="IG_LIKE"/>
    <property type="match status" value="1"/>
</dbReference>
<reference key="1">
    <citation type="journal article" date="2004" name="Oncogene">
        <title>Expression profiling and differential screening between hepatoblastomas and the corresponding normal livers: identification of high expression of the PLK1 oncogene as a poor-prognostic indicator of hepatoblastomas.</title>
        <authorList>
            <person name="Yamada S."/>
            <person name="Ohira M."/>
            <person name="Horie H."/>
            <person name="Ando K."/>
            <person name="Takayasu H."/>
            <person name="Suzuki Y."/>
            <person name="Sugano S."/>
            <person name="Hirata T."/>
            <person name="Goto T."/>
            <person name="Matsunaga T."/>
            <person name="Hiyama E."/>
            <person name="Hayashi Y."/>
            <person name="Ando H."/>
            <person name="Suita S."/>
            <person name="Kaneko M."/>
            <person name="Sasaki F."/>
            <person name="Hashizume K."/>
            <person name="Ohnuma N."/>
            <person name="Nakagawara A."/>
        </authorList>
    </citation>
    <scope>NUCLEOTIDE SEQUENCE [MRNA] (ISOFORM 1)</scope>
</reference>
<reference key="2">
    <citation type="submission" date="2001-08" db="EMBL/GenBank/DDBJ databases">
        <title>Molecular cloning and characterization of the human A1BG gene.</title>
        <authorList>
            <person name="Zhao Y."/>
            <person name="Sun D."/>
        </authorList>
    </citation>
    <scope>NUCLEOTIDE SEQUENCE [MRNA] (ISOFORM 1)</scope>
    <scope>VARIANT ARG-52</scope>
</reference>
<reference key="3">
    <citation type="journal article" date="2004" name="Nat. Genet.">
        <title>Complete sequencing and characterization of 21,243 full-length human cDNAs.</title>
        <authorList>
            <person name="Ota T."/>
            <person name="Suzuki Y."/>
            <person name="Nishikawa T."/>
            <person name="Otsuki T."/>
            <person name="Sugiyama T."/>
            <person name="Irie R."/>
            <person name="Wakamatsu A."/>
            <person name="Hayashi K."/>
            <person name="Sato H."/>
            <person name="Nagai K."/>
            <person name="Kimura K."/>
            <person name="Makita H."/>
            <person name="Sekine M."/>
            <person name="Obayashi M."/>
            <person name="Nishi T."/>
            <person name="Shibahara T."/>
            <person name="Tanaka T."/>
            <person name="Ishii S."/>
            <person name="Yamamoto J."/>
            <person name="Saito K."/>
            <person name="Kawai Y."/>
            <person name="Isono Y."/>
            <person name="Nakamura Y."/>
            <person name="Nagahari K."/>
            <person name="Murakami K."/>
            <person name="Yasuda T."/>
            <person name="Iwayanagi T."/>
            <person name="Wagatsuma M."/>
            <person name="Shiratori A."/>
            <person name="Sudo H."/>
            <person name="Hosoiri T."/>
            <person name="Kaku Y."/>
            <person name="Kodaira H."/>
            <person name="Kondo H."/>
            <person name="Sugawara M."/>
            <person name="Takahashi M."/>
            <person name="Kanda K."/>
            <person name="Yokoi T."/>
            <person name="Furuya T."/>
            <person name="Kikkawa E."/>
            <person name="Omura Y."/>
            <person name="Abe K."/>
            <person name="Kamihara K."/>
            <person name="Katsuta N."/>
            <person name="Sato K."/>
            <person name="Tanikawa M."/>
            <person name="Yamazaki M."/>
            <person name="Ninomiya K."/>
            <person name="Ishibashi T."/>
            <person name="Yamashita H."/>
            <person name="Murakawa K."/>
            <person name="Fujimori K."/>
            <person name="Tanai H."/>
            <person name="Kimata M."/>
            <person name="Watanabe M."/>
            <person name="Hiraoka S."/>
            <person name="Chiba Y."/>
            <person name="Ishida S."/>
            <person name="Ono Y."/>
            <person name="Takiguchi S."/>
            <person name="Watanabe S."/>
            <person name="Yosida M."/>
            <person name="Hotuta T."/>
            <person name="Kusano J."/>
            <person name="Kanehori K."/>
            <person name="Takahashi-Fujii A."/>
            <person name="Hara H."/>
            <person name="Tanase T.-O."/>
            <person name="Nomura Y."/>
            <person name="Togiya S."/>
            <person name="Komai F."/>
            <person name="Hara R."/>
            <person name="Takeuchi K."/>
            <person name="Arita M."/>
            <person name="Imose N."/>
            <person name="Musashino K."/>
            <person name="Yuuki H."/>
            <person name="Oshima A."/>
            <person name="Sasaki N."/>
            <person name="Aotsuka S."/>
            <person name="Yoshikawa Y."/>
            <person name="Matsunawa H."/>
            <person name="Ichihara T."/>
            <person name="Shiohata N."/>
            <person name="Sano S."/>
            <person name="Moriya S."/>
            <person name="Momiyama H."/>
            <person name="Satoh N."/>
            <person name="Takami S."/>
            <person name="Terashima Y."/>
            <person name="Suzuki O."/>
            <person name="Nakagawa S."/>
            <person name="Senoh A."/>
            <person name="Mizoguchi H."/>
            <person name="Goto Y."/>
            <person name="Shimizu F."/>
            <person name="Wakebe H."/>
            <person name="Hishigaki H."/>
            <person name="Watanabe T."/>
            <person name="Sugiyama A."/>
            <person name="Takemoto M."/>
            <person name="Kawakami B."/>
            <person name="Yamazaki M."/>
            <person name="Watanabe K."/>
            <person name="Kumagai A."/>
            <person name="Itakura S."/>
            <person name="Fukuzumi Y."/>
            <person name="Fujimori Y."/>
            <person name="Komiyama M."/>
            <person name="Tashiro H."/>
            <person name="Tanigami A."/>
            <person name="Fujiwara T."/>
            <person name="Ono T."/>
            <person name="Yamada K."/>
            <person name="Fujii Y."/>
            <person name="Ozaki K."/>
            <person name="Hirao M."/>
            <person name="Ohmori Y."/>
            <person name="Kawabata A."/>
            <person name="Hikiji T."/>
            <person name="Kobatake N."/>
            <person name="Inagaki H."/>
            <person name="Ikema Y."/>
            <person name="Okamoto S."/>
            <person name="Okitani R."/>
            <person name="Kawakami T."/>
            <person name="Noguchi S."/>
            <person name="Itoh T."/>
            <person name="Shigeta K."/>
            <person name="Senba T."/>
            <person name="Matsumura K."/>
            <person name="Nakajima Y."/>
            <person name="Mizuno T."/>
            <person name="Morinaga M."/>
            <person name="Sasaki M."/>
            <person name="Togashi T."/>
            <person name="Oyama M."/>
            <person name="Hata H."/>
            <person name="Watanabe M."/>
            <person name="Komatsu T."/>
            <person name="Mizushima-Sugano J."/>
            <person name="Satoh T."/>
            <person name="Shirai Y."/>
            <person name="Takahashi Y."/>
            <person name="Nakagawa K."/>
            <person name="Okumura K."/>
            <person name="Nagase T."/>
            <person name="Nomura N."/>
            <person name="Kikuchi H."/>
            <person name="Masuho Y."/>
            <person name="Yamashita R."/>
            <person name="Nakai K."/>
            <person name="Yada T."/>
            <person name="Nakamura Y."/>
            <person name="Ohara O."/>
            <person name="Isogai T."/>
            <person name="Sugano S."/>
        </authorList>
    </citation>
    <scope>NUCLEOTIDE SEQUENCE [LARGE SCALE MRNA] (ISOFORM 1)</scope>
    <scope>VARIANT ARG-52</scope>
    <source>
        <tissue>Mammary gland</tissue>
    </source>
</reference>
<reference key="4">
    <citation type="journal article" date="2004" name="Nature">
        <title>The DNA sequence and biology of human chromosome 19.</title>
        <authorList>
            <person name="Grimwood J."/>
            <person name="Gordon L.A."/>
            <person name="Olsen A.S."/>
            <person name="Terry A."/>
            <person name="Schmutz J."/>
            <person name="Lamerdin J.E."/>
            <person name="Hellsten U."/>
            <person name="Goodstein D."/>
            <person name="Couronne O."/>
            <person name="Tran-Gyamfi M."/>
            <person name="Aerts A."/>
            <person name="Altherr M."/>
            <person name="Ashworth L."/>
            <person name="Bajorek E."/>
            <person name="Black S."/>
            <person name="Branscomb E."/>
            <person name="Caenepeel S."/>
            <person name="Carrano A.V."/>
            <person name="Caoile C."/>
            <person name="Chan Y.M."/>
            <person name="Christensen M."/>
            <person name="Cleland C.A."/>
            <person name="Copeland A."/>
            <person name="Dalin E."/>
            <person name="Dehal P."/>
            <person name="Denys M."/>
            <person name="Detter J.C."/>
            <person name="Escobar J."/>
            <person name="Flowers D."/>
            <person name="Fotopulos D."/>
            <person name="Garcia C."/>
            <person name="Georgescu A.M."/>
            <person name="Glavina T."/>
            <person name="Gomez M."/>
            <person name="Gonzales E."/>
            <person name="Groza M."/>
            <person name="Hammon N."/>
            <person name="Hawkins T."/>
            <person name="Haydu L."/>
            <person name="Ho I."/>
            <person name="Huang W."/>
            <person name="Israni S."/>
            <person name="Jett J."/>
            <person name="Kadner K."/>
            <person name="Kimball H."/>
            <person name="Kobayashi A."/>
            <person name="Larionov V."/>
            <person name="Leem S.-H."/>
            <person name="Lopez F."/>
            <person name="Lou Y."/>
            <person name="Lowry S."/>
            <person name="Malfatti S."/>
            <person name="Martinez D."/>
            <person name="McCready P.M."/>
            <person name="Medina C."/>
            <person name="Morgan J."/>
            <person name="Nelson K."/>
            <person name="Nolan M."/>
            <person name="Ovcharenko I."/>
            <person name="Pitluck S."/>
            <person name="Pollard M."/>
            <person name="Popkie A.P."/>
            <person name="Predki P."/>
            <person name="Quan G."/>
            <person name="Ramirez L."/>
            <person name="Rash S."/>
            <person name="Retterer J."/>
            <person name="Rodriguez A."/>
            <person name="Rogers S."/>
            <person name="Salamov A."/>
            <person name="Salazar A."/>
            <person name="She X."/>
            <person name="Smith D."/>
            <person name="Slezak T."/>
            <person name="Solovyev V."/>
            <person name="Thayer N."/>
            <person name="Tice H."/>
            <person name="Tsai M."/>
            <person name="Ustaszewska A."/>
            <person name="Vo N."/>
            <person name="Wagner M."/>
            <person name="Wheeler J."/>
            <person name="Wu K."/>
            <person name="Xie G."/>
            <person name="Yang J."/>
            <person name="Dubchak I."/>
            <person name="Furey T.S."/>
            <person name="DeJong P."/>
            <person name="Dickson M."/>
            <person name="Gordon D."/>
            <person name="Eichler E.E."/>
            <person name="Pennacchio L.A."/>
            <person name="Richardson P."/>
            <person name="Stubbs L."/>
            <person name="Rokhsar D.S."/>
            <person name="Myers R.M."/>
            <person name="Rubin E.M."/>
            <person name="Lucas S.M."/>
        </authorList>
    </citation>
    <scope>NUCLEOTIDE SEQUENCE [LARGE SCALE GENOMIC DNA]</scope>
</reference>
<reference key="5">
    <citation type="journal article" date="2004" name="Genome Res.">
        <title>The status, quality, and expansion of the NIH full-length cDNA project: the Mammalian Gene Collection (MGC).</title>
        <authorList>
            <consortium name="The MGC Project Team"/>
        </authorList>
    </citation>
    <scope>NUCLEOTIDE SEQUENCE [LARGE SCALE MRNA] (ISOFORM 2)</scope>
    <source>
        <tissue>Ovary</tissue>
    </source>
</reference>
<reference key="6">
    <citation type="journal article" date="1986" name="Proc. Natl. Acad. Sci. U.S.A.">
        <title>Amino acid sequence of human plasma alpha 1B-glycoprotein: homology to the immunoglobulin supergene family.</title>
        <authorList>
            <person name="Ishioka N."/>
            <person name="Takahashi N."/>
            <person name="Putnam F.W."/>
        </authorList>
    </citation>
    <scope>PROTEIN SEQUENCE OF 22-495</scope>
    <scope>DISULFIDE BONDS</scope>
    <scope>GLYCOSYLATION AT ASN-44; ASN-179; ASN-363 AND ASN-371</scope>
    <scope>VARIANT ARG-52</scope>
</reference>
<reference key="7">
    <citation type="journal article" date="2004" name="Biochemistry">
        <title>Cysteine-rich secretory protein 3 is a ligand of alpha1B-glycoprotein in human plasma.</title>
        <authorList>
            <person name="Udby L."/>
            <person name="Sorensen O.E."/>
            <person name="Pass J."/>
            <person name="Johnsen A.H."/>
            <person name="Behrendt N."/>
            <person name="Borregaard N."/>
            <person name="Kjeldsen L."/>
        </authorList>
    </citation>
    <scope>INTERACTION WITH CRISP3</scope>
</reference>
<reference key="8">
    <citation type="journal article" date="2004" name="Proteomics">
        <title>Screening for N-glycosylated proteins by liquid chromatography mass spectrometry.</title>
        <authorList>
            <person name="Bunkenborg J."/>
            <person name="Pilch B.J."/>
            <person name="Podtelejnikov A.V."/>
            <person name="Wisniewski J.R."/>
        </authorList>
    </citation>
    <scope>GLYCOSYLATION [LARGE SCALE ANALYSIS] AT ASN-44 AND ASN-179</scope>
    <source>
        <tissue>Plasma</tissue>
    </source>
</reference>
<reference key="9">
    <citation type="journal article" date="2005" name="J. Proteome Res.">
        <title>Human plasma N-glycoproteome analysis by immunoaffinity subtraction, hydrazide chemistry, and mass spectrometry.</title>
        <authorList>
            <person name="Liu T."/>
            <person name="Qian W.-J."/>
            <person name="Gritsenko M.A."/>
            <person name="Camp D.G. II"/>
            <person name="Monroe M.E."/>
            <person name="Moore R.J."/>
            <person name="Smith R.D."/>
        </authorList>
    </citation>
    <scope>GLYCOSYLATION [LARGE SCALE ANALYSIS] AT ASN-44; ASN-179; ASN-363 AND ASN-371</scope>
    <source>
        <tissue>Plasma</tissue>
    </source>
</reference>
<reference key="10">
    <citation type="journal article" date="2009" name="Nat. Methods">
        <title>Enrichment of glycopeptides for glycan structure and attachment site identification.</title>
        <authorList>
            <person name="Nilsson J."/>
            <person name="Rueetschi U."/>
            <person name="Halim A."/>
            <person name="Hesse C."/>
            <person name="Carlsohn E."/>
            <person name="Brinkmalm G."/>
            <person name="Larson G."/>
        </authorList>
    </citation>
    <scope>GLYCOSYLATION [LARGE SCALE ANALYSIS] AT ASN-44</scope>
    <scope>STRUCTURE OF CARBOHYDRATES</scope>
    <source>
        <tissue>Cerebrospinal fluid</tissue>
    </source>
</reference>
<reference key="11">
    <citation type="journal article" date="2014" name="J. Proteomics">
        <title>An enzyme assisted RP-RPLC approach for in-depth analysis of human liver phosphoproteome.</title>
        <authorList>
            <person name="Bian Y."/>
            <person name="Song C."/>
            <person name="Cheng K."/>
            <person name="Dong M."/>
            <person name="Wang F."/>
            <person name="Huang J."/>
            <person name="Sun D."/>
            <person name="Wang L."/>
            <person name="Ye M."/>
            <person name="Zou H."/>
        </authorList>
    </citation>
    <scope>IDENTIFICATION BY MASS SPECTROMETRY [LARGE SCALE ANALYSIS]</scope>
    <source>
        <tissue>Liver</tissue>
    </source>
</reference>
<accession>P04217</accession>
<accession>A8K052</accession>
<accession>Q68CK0</accession>
<accession>Q8IYJ6</accession>
<accession>Q96P39</accession>
<comment type="subunit">
    <text evidence="4">Interacts with CRISP3.</text>
</comment>
<comment type="subcellular location">
    <subcellularLocation>
        <location>Secreted</location>
    </subcellularLocation>
</comment>
<comment type="alternative products">
    <event type="alternative splicing"/>
    <isoform>
        <id>P04217-1</id>
        <name>1</name>
        <sequence type="displayed"/>
    </isoform>
    <isoform>
        <id>P04217-2</id>
        <name>2</name>
        <sequence type="described" ref="VSP_040323"/>
    </isoform>
</comment>
<comment type="tissue specificity">
    <text>Plasma.</text>
</comment>
<evidence type="ECO:0000255" key="1">
    <source>
        <dbReference type="PROSITE-ProRule" id="PRU00114"/>
    </source>
</evidence>
<evidence type="ECO:0000269" key="2">
    <source>
    </source>
</evidence>
<evidence type="ECO:0000269" key="3">
    <source>
    </source>
</evidence>
<evidence type="ECO:0000269" key="4">
    <source>
    </source>
</evidence>
<evidence type="ECO:0000269" key="5">
    <source>
    </source>
</evidence>
<evidence type="ECO:0000269" key="6">
    <source>
    </source>
</evidence>
<evidence type="ECO:0000269" key="7">
    <source>
    </source>
</evidence>
<evidence type="ECO:0000269" key="8">
    <source ref="2"/>
</evidence>
<evidence type="ECO:0000303" key="9">
    <source>
    </source>
</evidence>
<evidence type="ECO:0000305" key="10"/>
<evidence type="ECO:0000305" key="11">
    <source>
    </source>
</evidence>
<organism>
    <name type="scientific">Homo sapiens</name>
    <name type="common">Human</name>
    <dbReference type="NCBI Taxonomy" id="9606"/>
    <lineage>
        <taxon>Eukaryota</taxon>
        <taxon>Metazoa</taxon>
        <taxon>Chordata</taxon>
        <taxon>Craniata</taxon>
        <taxon>Vertebrata</taxon>
        <taxon>Euteleostomi</taxon>
        <taxon>Mammalia</taxon>
        <taxon>Eutheria</taxon>
        <taxon>Euarchontoglires</taxon>
        <taxon>Primates</taxon>
        <taxon>Haplorrhini</taxon>
        <taxon>Catarrhini</taxon>
        <taxon>Hominidae</taxon>
        <taxon>Homo</taxon>
    </lineage>
</organism>
<sequence>MSMLVVFLLLWGVTWGPVTEAAIFYETQPSLWAESESLLKPLANVTLTCQAHLETPDFQLFKNGVAQEPVHLDSPAIKHQFLLTGDTQGRYRCRSGLSTGWTQLSKLLELTGPKSLPAPWLSMAPVSWITPGLKTTAVCRGVLRGVTFLLRREGDHEFLEVPEAQEDVEATFPVHQPGNYSCSYRTDGEGALSEPSATVTIEELAAPPPPVLMHHGESSQVLHPGNKVTLTCVAPLSGVDFQLRRGEKELLVPRSSTSPDRIFFHLNAVALGDGGHYTCRYRLHDNQNGWSGDSAPVELILSDETLPAPEFSPEPESGRALRLRCLAPLEGARFALVREDRGGRRVHRFQSPAGTEALFELHNISVADSANYSCVYVDLKPPFGGSAPSERLELHVDGPPPRPQLRATWSGAVLAGRDAVLRCEGPIPDVTFELLREGETKAVKTVRTPGAAANLELIFVGPQHAGNYRCRYRSWVPHTFESELSDPVELLVAES</sequence>
<feature type="signal peptide" evidence="7">
    <location>
        <begin position="1"/>
        <end position="21"/>
    </location>
</feature>
<feature type="chain" id="PRO_0000014502" description="Alpha-1B-glycoprotein">
    <location>
        <begin position="22"/>
        <end position="495"/>
    </location>
</feature>
<feature type="domain" description="Ig-like V-type 1">
    <location>
        <begin position="22"/>
        <end position="113"/>
    </location>
</feature>
<feature type="domain" description="Ig-like V-type 2">
    <location>
        <begin position="114"/>
        <end position="206"/>
    </location>
</feature>
<feature type="domain" description="Ig-like V-type 3">
    <location>
        <begin position="207"/>
        <end position="299"/>
    </location>
</feature>
<feature type="domain" description="Ig-like V-type 4">
    <location>
        <begin position="300"/>
        <end position="397"/>
    </location>
</feature>
<feature type="domain" description="Ig-like V-type 5">
    <location>
        <begin position="398"/>
        <end position="495"/>
    </location>
</feature>
<feature type="glycosylation site" description="N-linked (GlcNAc...) (complex) asparagine" evidence="3 5 6 7">
    <location>
        <position position="44"/>
    </location>
</feature>
<feature type="glycosylation site" description="N-linked (GlcNAc...) asparagine" evidence="3 5 7">
    <location>
        <position position="179"/>
    </location>
</feature>
<feature type="glycosylation site" description="N-linked (GlcNAc...) asparagine" evidence="5 7">
    <location>
        <position position="363"/>
    </location>
</feature>
<feature type="glycosylation site" description="N-linked (GlcNAc...) asparagine" evidence="5 7">
    <location>
        <position position="371"/>
    </location>
</feature>
<feature type="disulfide bond" evidence="11">
    <location>
        <begin position="49"/>
        <end position="93"/>
    </location>
</feature>
<feature type="disulfide bond" evidence="1 7">
    <location>
        <begin position="139"/>
        <end position="182"/>
    </location>
</feature>
<feature type="disulfide bond" evidence="1 7">
    <location>
        <begin position="232"/>
        <end position="279"/>
    </location>
</feature>
<feature type="disulfide bond" evidence="1 7">
    <location>
        <begin position="325"/>
        <end position="374"/>
    </location>
</feature>
<feature type="disulfide bond" evidence="11">
    <location>
        <begin position="423"/>
        <end position="470"/>
    </location>
</feature>
<feature type="splice variant" id="VSP_040323" description="In isoform 2." evidence="9">
    <location>
        <begin position="1"/>
        <end position="122"/>
    </location>
</feature>
<feature type="sequence variant" id="VAR_018369" description="In dbSNP:rs893184." evidence="2 7 8">
    <original>H</original>
    <variation>R</variation>
    <location>
        <position position="52"/>
    </location>
</feature>
<feature type="sequence variant" id="VAR_018370" description="In dbSNP:rs2241788.">
    <original>H</original>
    <variation>R</variation>
    <location>
        <position position="395"/>
    </location>
</feature>
<feature type="sequence conflict" description="In Ref. 2; AAL07469." evidence="10" ref="2">
    <original>S</original>
    <variation>G</variation>
    <location>
        <position position="105"/>
    </location>
</feature>
<feature type="sequence conflict" description="In Ref. 2; AAL07469." evidence="10" ref="2">
    <original>S</original>
    <variation>P</variation>
    <location>
        <position position="127"/>
    </location>
</feature>
<feature type="sequence conflict" description="In Ref. 2; AAL07469." evidence="10" ref="2">
    <original>V</original>
    <variation>E</variation>
    <location>
        <position position="146"/>
    </location>
</feature>
<feature type="sequence conflict" description="In Ref. 3; BAF82106." evidence="10" ref="3">
    <original>E</original>
    <variation>G</variation>
    <location>
        <position position="304"/>
    </location>
</feature>
<feature type="sequence conflict" description="In Ref. 2; AAL07469." evidence="10" ref="2">
    <original>V</original>
    <variation>A</variation>
    <location>
        <position position="413"/>
    </location>
</feature>
<feature type="sequence conflict" description="In Ref. 2; AAL07469." evidence="10" ref="2">
    <original>VR</original>
    <variation>IP</variation>
    <location>
        <begin position="446"/>
        <end position="447"/>
    </location>
</feature>
<gene>
    <name type="primary">A1BG</name>
</gene>
<keyword id="KW-0025">Alternative splicing</keyword>
<keyword id="KW-0903">Direct protein sequencing</keyword>
<keyword id="KW-1015">Disulfide bond</keyword>
<keyword id="KW-0325">Glycoprotein</keyword>
<keyword id="KW-0393">Immunoglobulin domain</keyword>
<keyword id="KW-1267">Proteomics identification</keyword>
<keyword id="KW-1185">Reference proteome</keyword>
<keyword id="KW-0677">Repeat</keyword>
<keyword id="KW-0964">Secreted</keyword>
<keyword id="KW-0732">Signal</keyword>
<proteinExistence type="evidence at protein level"/>
<protein>
    <recommendedName>
        <fullName>Alpha-1B-glycoprotein</fullName>
    </recommendedName>
    <alternativeName>
        <fullName>Alpha-1-B glycoprotein</fullName>
    </alternativeName>
</protein>
<name>A1BG_HUMAN</name>